<comment type="function">
    <text evidence="1">Catalyzes the decarboxylation of S-adenosylmethionine to S-adenosylmethioninamine (dcAdoMet), the propylamine donor required for the synthesis of the polyamines spermine and spermidine from the diamine putrescine.</text>
</comment>
<comment type="catalytic activity">
    <reaction evidence="1">
        <text>S-adenosyl-L-methionine + H(+) = S-adenosyl 3-(methylsulfanyl)propylamine + CO2</text>
        <dbReference type="Rhea" id="RHEA:15981"/>
        <dbReference type="ChEBI" id="CHEBI:15378"/>
        <dbReference type="ChEBI" id="CHEBI:16526"/>
        <dbReference type="ChEBI" id="CHEBI:57443"/>
        <dbReference type="ChEBI" id="CHEBI:59789"/>
        <dbReference type="EC" id="4.1.1.50"/>
    </reaction>
</comment>
<comment type="cofactor">
    <cofactor evidence="1">
        <name>pyruvate</name>
        <dbReference type="ChEBI" id="CHEBI:15361"/>
    </cofactor>
    <text evidence="1">Binds 1 pyruvoyl group covalently per subunit.</text>
</comment>
<comment type="pathway">
    <text evidence="1">Amine and polyamine biosynthesis; S-adenosylmethioninamine biosynthesis; S-adenosylmethioninamine from S-adenosyl-L-methionine: step 1/1.</text>
</comment>
<comment type="subunit">
    <text evidence="1">Heterooctamer of four alpha and four beta chains arranged as a tetramer of alpha/beta heterodimers.</text>
</comment>
<comment type="PTM">
    <text evidence="1">Is synthesized initially as an inactive proenzyme. Formation of the active enzyme involves a self-maturation process in which the active site pyruvoyl group is generated from an internal serine residue via an autocatalytic post-translational modification. Two non-identical subunits are generated from the proenzyme in this reaction, and the pyruvate is formed at the N-terminus of the alpha chain, which is derived from the carboxyl end of the proenzyme. The post-translation cleavage follows an unusual pathway, termed non-hydrolytic serinolysis, in which the side chain hydroxyl group of the serine supplies its oxygen atom to form the C-terminus of the beta chain, while the remainder of the serine residue undergoes an oxidative deamination to produce ammonia and the pyruvoyl group blocking the N-terminus of the alpha chain.</text>
</comment>
<comment type="similarity">
    <text evidence="1">Belongs to the prokaryotic AdoMetDC family. Type 2 subfamily.</text>
</comment>
<keyword id="KW-0068">Autocatalytic cleavage</keyword>
<keyword id="KW-0210">Decarboxylase</keyword>
<keyword id="KW-0456">Lyase</keyword>
<keyword id="KW-0620">Polyamine biosynthesis</keyword>
<keyword id="KW-0670">Pyruvate</keyword>
<keyword id="KW-0949">S-adenosyl-L-methionine</keyword>
<keyword id="KW-0704">Schiff base</keyword>
<keyword id="KW-0745">Spermidine biosynthesis</keyword>
<keyword id="KW-0865">Zymogen</keyword>
<feature type="chain" id="PRO_1000081174" description="S-adenosylmethionine decarboxylase beta chain" evidence="1">
    <location>
        <begin position="1"/>
        <end position="111"/>
    </location>
</feature>
<feature type="chain" id="PRO_1000081175" description="S-adenosylmethionine decarboxylase alpha chain" evidence="1">
    <location>
        <begin position="112"/>
        <end position="264"/>
    </location>
</feature>
<feature type="active site" description="Schiff-base intermediate with substrate; via pyruvic acid" evidence="1">
    <location>
        <position position="112"/>
    </location>
</feature>
<feature type="active site" description="Proton acceptor; for processing activity" evidence="1">
    <location>
        <position position="117"/>
    </location>
</feature>
<feature type="active site" description="Proton donor; for catalytic activity" evidence="1">
    <location>
        <position position="140"/>
    </location>
</feature>
<feature type="site" description="Cleavage (non-hydrolytic); by autolysis" evidence="1">
    <location>
        <begin position="111"/>
        <end position="112"/>
    </location>
</feature>
<feature type="modified residue" description="Pyruvic acid (Ser); by autocatalysis" evidence="1">
    <location>
        <position position="112"/>
    </location>
</feature>
<accession>B1IQM0</accession>
<name>SPED_ECOLC</name>
<reference key="1">
    <citation type="submission" date="2008-02" db="EMBL/GenBank/DDBJ databases">
        <title>Complete sequence of Escherichia coli C str. ATCC 8739.</title>
        <authorList>
            <person name="Copeland A."/>
            <person name="Lucas S."/>
            <person name="Lapidus A."/>
            <person name="Glavina del Rio T."/>
            <person name="Dalin E."/>
            <person name="Tice H."/>
            <person name="Bruce D."/>
            <person name="Goodwin L."/>
            <person name="Pitluck S."/>
            <person name="Kiss H."/>
            <person name="Brettin T."/>
            <person name="Detter J.C."/>
            <person name="Han C."/>
            <person name="Kuske C.R."/>
            <person name="Schmutz J."/>
            <person name="Larimer F."/>
            <person name="Land M."/>
            <person name="Hauser L."/>
            <person name="Kyrpides N."/>
            <person name="Mikhailova N."/>
            <person name="Ingram L."/>
            <person name="Richardson P."/>
        </authorList>
    </citation>
    <scope>NUCLEOTIDE SEQUENCE [LARGE SCALE GENOMIC DNA]</scope>
    <source>
        <strain>ATCC 8739 / DSM 1576 / NBRC 3972 / NCIMB 8545 / WDCM 00012 / Crooks</strain>
    </source>
</reference>
<organism>
    <name type="scientific">Escherichia coli (strain ATCC 8739 / DSM 1576 / NBRC 3972 / NCIMB 8545 / WDCM 00012 / Crooks)</name>
    <dbReference type="NCBI Taxonomy" id="481805"/>
    <lineage>
        <taxon>Bacteria</taxon>
        <taxon>Pseudomonadati</taxon>
        <taxon>Pseudomonadota</taxon>
        <taxon>Gammaproteobacteria</taxon>
        <taxon>Enterobacterales</taxon>
        <taxon>Enterobacteriaceae</taxon>
        <taxon>Escherichia</taxon>
    </lineage>
</organism>
<gene>
    <name evidence="1" type="primary">speD</name>
    <name type="ordered locus">EcolC_3539</name>
</gene>
<proteinExistence type="inferred from homology"/>
<dbReference type="EC" id="4.1.1.50" evidence="1"/>
<dbReference type="EMBL" id="CP000946">
    <property type="protein sequence ID" value="ACA79153.1"/>
    <property type="molecule type" value="Genomic_DNA"/>
</dbReference>
<dbReference type="RefSeq" id="WP_000734287.1">
    <property type="nucleotide sequence ID" value="NZ_MTFT01000035.1"/>
</dbReference>
<dbReference type="GeneID" id="93777316"/>
<dbReference type="KEGG" id="ecl:EcolC_3539"/>
<dbReference type="HOGENOM" id="CLU_092007_0_0_6"/>
<dbReference type="UniPathway" id="UPA00331">
    <property type="reaction ID" value="UER00451"/>
</dbReference>
<dbReference type="GO" id="GO:0005829">
    <property type="term" value="C:cytosol"/>
    <property type="evidence" value="ECO:0007669"/>
    <property type="project" value="TreeGrafter"/>
</dbReference>
<dbReference type="GO" id="GO:0004014">
    <property type="term" value="F:adenosylmethionine decarboxylase activity"/>
    <property type="evidence" value="ECO:0007669"/>
    <property type="project" value="UniProtKB-UniRule"/>
</dbReference>
<dbReference type="GO" id="GO:0008295">
    <property type="term" value="P:spermidine biosynthetic process"/>
    <property type="evidence" value="ECO:0007669"/>
    <property type="project" value="UniProtKB-UniRule"/>
</dbReference>
<dbReference type="FunFam" id="3.60.90.10:FF:000001">
    <property type="entry name" value="S-adenosylmethionine decarboxylase proenzyme"/>
    <property type="match status" value="1"/>
</dbReference>
<dbReference type="Gene3D" id="3.60.90.10">
    <property type="entry name" value="S-adenosylmethionine decarboxylase"/>
    <property type="match status" value="1"/>
</dbReference>
<dbReference type="HAMAP" id="MF_00465">
    <property type="entry name" value="AdoMetDC_2"/>
    <property type="match status" value="1"/>
</dbReference>
<dbReference type="InterPro" id="IPR003826">
    <property type="entry name" value="AdoMetDC_fam_prok"/>
</dbReference>
<dbReference type="InterPro" id="IPR009165">
    <property type="entry name" value="S-AdoMet_deCO2ase_bac"/>
</dbReference>
<dbReference type="InterPro" id="IPR016067">
    <property type="entry name" value="S-AdoMet_deCO2ase_core"/>
</dbReference>
<dbReference type="NCBIfam" id="TIGR03331">
    <property type="entry name" value="SAM_DCase_Eco"/>
    <property type="match status" value="1"/>
</dbReference>
<dbReference type="PANTHER" id="PTHR33866">
    <property type="entry name" value="S-ADENOSYLMETHIONINE DECARBOXYLASE PROENZYME"/>
    <property type="match status" value="1"/>
</dbReference>
<dbReference type="PANTHER" id="PTHR33866:SF1">
    <property type="entry name" value="S-ADENOSYLMETHIONINE DECARBOXYLASE PROENZYME"/>
    <property type="match status" value="1"/>
</dbReference>
<dbReference type="Pfam" id="PF02675">
    <property type="entry name" value="AdoMet_dc"/>
    <property type="match status" value="1"/>
</dbReference>
<dbReference type="PIRSF" id="PIRSF001356">
    <property type="entry name" value="SAM_decarboxylas"/>
    <property type="match status" value="1"/>
</dbReference>
<dbReference type="SUPFAM" id="SSF56276">
    <property type="entry name" value="S-adenosylmethionine decarboxylase"/>
    <property type="match status" value="1"/>
</dbReference>
<evidence type="ECO:0000255" key="1">
    <source>
        <dbReference type="HAMAP-Rule" id="MF_00465"/>
    </source>
</evidence>
<sequence length="264" mass="30385">MKKLKLHGFNNLTKSLSFCIYDICYAKTAEERDGYIAYIDELYNANRLTEILSETCSIIGANILNIARQDYEPQGASVTILVSEEPVDPKLIDKTEHPGPLPETVVAHLDKSHICVHTYPESHPEGGLCTFRADIEVSTCGVISPLKALNYLIHQLESDIVTIDYRVRGFTRDINGMKHFIDHEINSIQNFMSDDMKALYDMVDVNVYQENIFHTKMLLKEFDLKHYMFHTKPEDLTDSERQEITAALWKEMREIYYGRNMPAV</sequence>
<protein>
    <recommendedName>
        <fullName evidence="1">S-adenosylmethionine decarboxylase proenzyme</fullName>
        <shortName evidence="1">AdoMetDC</shortName>
        <shortName evidence="1">SAMDC</shortName>
        <ecNumber evidence="1">4.1.1.50</ecNumber>
    </recommendedName>
    <component>
        <recommendedName>
            <fullName evidence="1">S-adenosylmethionine decarboxylase beta chain</fullName>
        </recommendedName>
    </component>
    <component>
        <recommendedName>
            <fullName evidence="1">S-adenosylmethionine decarboxylase alpha chain</fullName>
        </recommendedName>
    </component>
</protein>